<gene>
    <name evidence="1" type="primary">rtcA</name>
    <name type="ordered locus">Ecok1_33890</name>
    <name type="ORF">APECO1_3047</name>
</gene>
<protein>
    <recommendedName>
        <fullName evidence="1">RNA 3'-terminal phosphate cyclase</fullName>
        <shortName evidence="1">RNA cyclase</shortName>
        <shortName evidence="1">RNA-3'-phosphate cyclase</shortName>
        <ecNumber evidence="1">6.5.1.4</ecNumber>
    </recommendedName>
</protein>
<organism>
    <name type="scientific">Escherichia coli O1:K1 / APEC</name>
    <dbReference type="NCBI Taxonomy" id="405955"/>
    <lineage>
        <taxon>Bacteria</taxon>
        <taxon>Pseudomonadati</taxon>
        <taxon>Pseudomonadota</taxon>
        <taxon>Gammaproteobacteria</taxon>
        <taxon>Enterobacterales</taxon>
        <taxon>Enterobacteriaceae</taxon>
        <taxon>Escherichia</taxon>
    </lineage>
</organism>
<dbReference type="EC" id="6.5.1.4" evidence="1"/>
<dbReference type="EMBL" id="CP000468">
    <property type="protein sequence ID" value="ABJ02883.1"/>
    <property type="status" value="ALT_INIT"/>
    <property type="molecule type" value="Genomic_DNA"/>
</dbReference>
<dbReference type="RefSeq" id="WP_001350819.1">
    <property type="nucleotide sequence ID" value="NZ_CADILS010000030.1"/>
</dbReference>
<dbReference type="SMR" id="A1AGU3"/>
<dbReference type="KEGG" id="ecv:APECO1_3047"/>
<dbReference type="HOGENOM" id="CLU_027882_0_0_6"/>
<dbReference type="Proteomes" id="UP000008216">
    <property type="component" value="Chromosome"/>
</dbReference>
<dbReference type="GO" id="GO:0005737">
    <property type="term" value="C:cytoplasm"/>
    <property type="evidence" value="ECO:0007669"/>
    <property type="project" value="UniProtKB-SubCell"/>
</dbReference>
<dbReference type="GO" id="GO:0005524">
    <property type="term" value="F:ATP binding"/>
    <property type="evidence" value="ECO:0007669"/>
    <property type="project" value="UniProtKB-KW"/>
</dbReference>
<dbReference type="GO" id="GO:0003963">
    <property type="term" value="F:RNA-3'-phosphate cyclase activity"/>
    <property type="evidence" value="ECO:0007669"/>
    <property type="project" value="UniProtKB-UniRule"/>
</dbReference>
<dbReference type="GO" id="GO:0006396">
    <property type="term" value="P:RNA processing"/>
    <property type="evidence" value="ECO:0007669"/>
    <property type="project" value="InterPro"/>
</dbReference>
<dbReference type="FunFam" id="3.65.10.20:FF:000002">
    <property type="entry name" value="GM19193"/>
    <property type="match status" value="1"/>
</dbReference>
<dbReference type="FunFam" id="3.30.360.20:FF:000003">
    <property type="entry name" value="RNA 3'-terminal phosphate cyclase"/>
    <property type="match status" value="1"/>
</dbReference>
<dbReference type="Gene3D" id="3.65.10.20">
    <property type="entry name" value="RNA 3'-terminal phosphate cyclase domain"/>
    <property type="match status" value="1"/>
</dbReference>
<dbReference type="Gene3D" id="3.30.360.20">
    <property type="entry name" value="RNA 3'-terminal phosphate cyclase, insert domain"/>
    <property type="match status" value="1"/>
</dbReference>
<dbReference type="HAMAP" id="MF_00200">
    <property type="entry name" value="RTC"/>
    <property type="match status" value="1"/>
</dbReference>
<dbReference type="InterPro" id="IPR013791">
    <property type="entry name" value="RNA3'-term_phos_cycl_insert"/>
</dbReference>
<dbReference type="InterPro" id="IPR023797">
    <property type="entry name" value="RNA3'_phos_cyclase_dom"/>
</dbReference>
<dbReference type="InterPro" id="IPR037136">
    <property type="entry name" value="RNA3'_phos_cyclase_dom_sf"/>
</dbReference>
<dbReference type="InterPro" id="IPR000228">
    <property type="entry name" value="RNA3'_term_phos_cyc"/>
</dbReference>
<dbReference type="InterPro" id="IPR017770">
    <property type="entry name" value="RNA3'_term_phos_cyc_type_1"/>
</dbReference>
<dbReference type="InterPro" id="IPR020719">
    <property type="entry name" value="RNA3'_term_phos_cycl-like_CS"/>
</dbReference>
<dbReference type="InterPro" id="IPR013792">
    <property type="entry name" value="RNA3'P_cycl/enolpyr_Trfase_a/b"/>
</dbReference>
<dbReference type="InterPro" id="IPR036553">
    <property type="entry name" value="RPTC_insert"/>
</dbReference>
<dbReference type="NCBIfam" id="NF003246">
    <property type="entry name" value="PRK04204.1-2"/>
    <property type="match status" value="1"/>
</dbReference>
<dbReference type="NCBIfam" id="NF003247">
    <property type="entry name" value="PRK04204.1-3"/>
    <property type="match status" value="1"/>
</dbReference>
<dbReference type="NCBIfam" id="TIGR03399">
    <property type="entry name" value="RNA_3prim_cycl"/>
    <property type="match status" value="1"/>
</dbReference>
<dbReference type="PANTHER" id="PTHR11096">
    <property type="entry name" value="RNA 3' TERMINAL PHOSPHATE CYCLASE"/>
    <property type="match status" value="1"/>
</dbReference>
<dbReference type="PANTHER" id="PTHR11096:SF0">
    <property type="entry name" value="RNA 3'-TERMINAL PHOSPHATE CYCLASE"/>
    <property type="match status" value="1"/>
</dbReference>
<dbReference type="Pfam" id="PF01137">
    <property type="entry name" value="RTC"/>
    <property type="match status" value="1"/>
</dbReference>
<dbReference type="Pfam" id="PF05189">
    <property type="entry name" value="RTC_insert"/>
    <property type="match status" value="1"/>
</dbReference>
<dbReference type="PIRSF" id="PIRSF005378">
    <property type="entry name" value="RNA3'_term_phos_cycl_euk"/>
    <property type="match status" value="1"/>
</dbReference>
<dbReference type="SUPFAM" id="SSF55205">
    <property type="entry name" value="EPT/RTPC-like"/>
    <property type="match status" value="2"/>
</dbReference>
<dbReference type="SUPFAM" id="SSF52913">
    <property type="entry name" value="RNA 3'-terminal phosphate cyclase, RPTC, insert domain"/>
    <property type="match status" value="1"/>
</dbReference>
<dbReference type="PROSITE" id="PS01287">
    <property type="entry name" value="RTC"/>
    <property type="match status" value="1"/>
</dbReference>
<sequence length="338" mass="35896">MKRMIALDGAQGEGGGQILRSALSLSMITGQPFTITGIRAGRAKPGLLRQHLTAVKAAAEICRATVEGAELGSQRLVFRPGTVRGGDYRFAIGSAGSCTLVLQTVLPALWFADGPSRVEVSGGTDNPSAPPADFIRRVLEPLLAKIGVHQQTTLLRHGFYPAGGGVVATEVSPVASFNSLQLGERGNIVQMRGEVLLAGVPRHVAEREIATLAGSFSLHEQNIHNLPRDQGPGNTVSLEVESENITERFFVVGEKRVSAEVVAAQLVKEVKRYLASPAAVGEYLADQLVLPMALAGTGEFTVAHPSCHLLTNIAVVERFLPVRFGLIETDGVTRVSIE</sequence>
<evidence type="ECO:0000255" key="1">
    <source>
        <dbReference type="HAMAP-Rule" id="MF_00200"/>
    </source>
</evidence>
<evidence type="ECO:0000305" key="2"/>
<accession>A1AGU3</accession>
<feature type="chain" id="PRO_0000325187" description="RNA 3'-terminal phosphate cyclase">
    <location>
        <begin position="1"/>
        <end position="338"/>
    </location>
</feature>
<feature type="active site" description="Tele-AMP-histidine intermediate" evidence="1">
    <location>
        <position position="308"/>
    </location>
</feature>
<feature type="binding site" evidence="1">
    <location>
        <position position="103"/>
    </location>
    <ligand>
        <name>ATP</name>
        <dbReference type="ChEBI" id="CHEBI:30616"/>
    </ligand>
</feature>
<feature type="binding site" evidence="1">
    <location>
        <begin position="283"/>
        <end position="287"/>
    </location>
    <ligand>
        <name>ATP</name>
        <dbReference type="ChEBI" id="CHEBI:30616"/>
    </ligand>
</feature>
<reference key="1">
    <citation type="journal article" date="2007" name="J. Bacteriol.">
        <title>The genome sequence of avian pathogenic Escherichia coli strain O1:K1:H7 shares strong similarities with human extraintestinal pathogenic E. coli genomes.</title>
        <authorList>
            <person name="Johnson T.J."/>
            <person name="Kariyawasam S."/>
            <person name="Wannemuehler Y."/>
            <person name="Mangiamele P."/>
            <person name="Johnson S.J."/>
            <person name="Doetkott C."/>
            <person name="Skyberg J.A."/>
            <person name="Lynne A.M."/>
            <person name="Johnson J.R."/>
            <person name="Nolan L.K."/>
        </authorList>
    </citation>
    <scope>NUCLEOTIDE SEQUENCE [LARGE SCALE GENOMIC DNA]</scope>
</reference>
<keyword id="KW-0067">ATP-binding</keyword>
<keyword id="KW-0963">Cytoplasm</keyword>
<keyword id="KW-0436">Ligase</keyword>
<keyword id="KW-0547">Nucleotide-binding</keyword>
<keyword id="KW-1185">Reference proteome</keyword>
<comment type="function">
    <text evidence="1">Catalyzes the conversion of 3'-phosphate to a 2',3'-cyclic phosphodiester at the end of RNA. The mechanism of action of the enzyme occurs in 3 steps: (A) adenylation of the enzyme by ATP; (B) transfer of adenylate to an RNA-N3'P to produce RNA-N3'PP5'A; (C) and attack of the adjacent 2'-hydroxyl on the 3'-phosphorus in the diester linkage to produce the cyclic end product. The biological role of this enzyme is unknown but it is likely to function in some aspects of cellular RNA processing.</text>
</comment>
<comment type="catalytic activity">
    <reaction evidence="1">
        <text>a 3'-end 3'-phospho-ribonucleotide-RNA + ATP = a 3'-end 2',3'-cyclophospho-ribonucleotide-RNA + AMP + diphosphate</text>
        <dbReference type="Rhea" id="RHEA:23976"/>
        <dbReference type="Rhea" id="RHEA-COMP:10463"/>
        <dbReference type="Rhea" id="RHEA-COMP:10464"/>
        <dbReference type="ChEBI" id="CHEBI:30616"/>
        <dbReference type="ChEBI" id="CHEBI:33019"/>
        <dbReference type="ChEBI" id="CHEBI:83062"/>
        <dbReference type="ChEBI" id="CHEBI:83064"/>
        <dbReference type="ChEBI" id="CHEBI:456215"/>
        <dbReference type="EC" id="6.5.1.4"/>
    </reaction>
</comment>
<comment type="subcellular location">
    <subcellularLocation>
        <location evidence="1">Cytoplasm</location>
    </subcellularLocation>
</comment>
<comment type="similarity">
    <text evidence="1">Belongs to the RNA 3'-terminal cyclase family. Type 1 subfamily.</text>
</comment>
<comment type="sequence caution" evidence="2">
    <conflict type="erroneous initiation">
        <sequence resource="EMBL-CDS" id="ABJ02883"/>
    </conflict>
</comment>
<proteinExistence type="inferred from homology"/>
<name>RTCA_ECOK1</name>